<dbReference type="EMBL" id="CP001191">
    <property type="protein sequence ID" value="ACI55175.1"/>
    <property type="molecule type" value="Genomic_DNA"/>
</dbReference>
<dbReference type="RefSeq" id="WP_012557778.1">
    <property type="nucleotide sequence ID" value="NC_011369.1"/>
</dbReference>
<dbReference type="SMR" id="B5ZQP7"/>
<dbReference type="STRING" id="395492.Rleg2_1890"/>
<dbReference type="KEGG" id="rlt:Rleg2_1890"/>
<dbReference type="eggNOG" id="COG0509">
    <property type="taxonomic scope" value="Bacteria"/>
</dbReference>
<dbReference type="HOGENOM" id="CLU_097408_2_2_5"/>
<dbReference type="Proteomes" id="UP000008330">
    <property type="component" value="Chromosome"/>
</dbReference>
<dbReference type="GO" id="GO:0005737">
    <property type="term" value="C:cytoplasm"/>
    <property type="evidence" value="ECO:0007669"/>
    <property type="project" value="TreeGrafter"/>
</dbReference>
<dbReference type="GO" id="GO:0005960">
    <property type="term" value="C:glycine cleavage complex"/>
    <property type="evidence" value="ECO:0007669"/>
    <property type="project" value="InterPro"/>
</dbReference>
<dbReference type="GO" id="GO:0019464">
    <property type="term" value="P:glycine decarboxylation via glycine cleavage system"/>
    <property type="evidence" value="ECO:0007669"/>
    <property type="project" value="UniProtKB-UniRule"/>
</dbReference>
<dbReference type="CDD" id="cd06848">
    <property type="entry name" value="GCS_H"/>
    <property type="match status" value="1"/>
</dbReference>
<dbReference type="Gene3D" id="2.40.50.100">
    <property type="match status" value="1"/>
</dbReference>
<dbReference type="HAMAP" id="MF_00272">
    <property type="entry name" value="GcvH"/>
    <property type="match status" value="1"/>
</dbReference>
<dbReference type="InterPro" id="IPR003016">
    <property type="entry name" value="2-oxoA_DH_lipoyl-BS"/>
</dbReference>
<dbReference type="InterPro" id="IPR000089">
    <property type="entry name" value="Biotin_lipoyl"/>
</dbReference>
<dbReference type="InterPro" id="IPR002930">
    <property type="entry name" value="GCV_H"/>
</dbReference>
<dbReference type="InterPro" id="IPR033753">
    <property type="entry name" value="GCV_H/Fam206"/>
</dbReference>
<dbReference type="InterPro" id="IPR017453">
    <property type="entry name" value="GCV_H_sub"/>
</dbReference>
<dbReference type="InterPro" id="IPR011053">
    <property type="entry name" value="Single_hybrid_motif"/>
</dbReference>
<dbReference type="NCBIfam" id="TIGR00527">
    <property type="entry name" value="gcvH"/>
    <property type="match status" value="1"/>
</dbReference>
<dbReference type="NCBIfam" id="NF002270">
    <property type="entry name" value="PRK01202.1"/>
    <property type="match status" value="1"/>
</dbReference>
<dbReference type="PANTHER" id="PTHR11715">
    <property type="entry name" value="GLYCINE CLEAVAGE SYSTEM H PROTEIN"/>
    <property type="match status" value="1"/>
</dbReference>
<dbReference type="PANTHER" id="PTHR11715:SF3">
    <property type="entry name" value="GLYCINE CLEAVAGE SYSTEM H PROTEIN-RELATED"/>
    <property type="match status" value="1"/>
</dbReference>
<dbReference type="Pfam" id="PF01597">
    <property type="entry name" value="GCV_H"/>
    <property type="match status" value="1"/>
</dbReference>
<dbReference type="SUPFAM" id="SSF51230">
    <property type="entry name" value="Single hybrid motif"/>
    <property type="match status" value="1"/>
</dbReference>
<dbReference type="PROSITE" id="PS50968">
    <property type="entry name" value="BIOTINYL_LIPOYL"/>
    <property type="match status" value="1"/>
</dbReference>
<dbReference type="PROSITE" id="PS00189">
    <property type="entry name" value="LIPOYL"/>
    <property type="match status" value="1"/>
</dbReference>
<name>GCSH_RHILW</name>
<comment type="function">
    <text evidence="1">The glycine cleavage system catalyzes the degradation of glycine. The H protein shuttles the methylamine group of glycine from the P protein to the T protein.</text>
</comment>
<comment type="cofactor">
    <cofactor evidence="1">
        <name>(R)-lipoate</name>
        <dbReference type="ChEBI" id="CHEBI:83088"/>
    </cofactor>
    <text evidence="1">Binds 1 lipoyl cofactor covalently.</text>
</comment>
<comment type="subunit">
    <text evidence="1">The glycine cleavage system is composed of four proteins: P, T, L and H.</text>
</comment>
<comment type="similarity">
    <text evidence="1">Belongs to the GcvH family.</text>
</comment>
<sequence>MLKFTEEHEWLQIEGSVATVGITNYAVDQLGDLVFVELPEVGATFSKNGNAATVESVKAASDVYCPLDGEITEVNPAIVADPSLVNSDPQGAGWFFKLKLANPADADGLLDEAAYKELTA</sequence>
<organism>
    <name type="scientific">Rhizobium leguminosarum bv. trifolii (strain WSM2304)</name>
    <dbReference type="NCBI Taxonomy" id="395492"/>
    <lineage>
        <taxon>Bacteria</taxon>
        <taxon>Pseudomonadati</taxon>
        <taxon>Pseudomonadota</taxon>
        <taxon>Alphaproteobacteria</taxon>
        <taxon>Hyphomicrobiales</taxon>
        <taxon>Rhizobiaceae</taxon>
        <taxon>Rhizobium/Agrobacterium group</taxon>
        <taxon>Rhizobium</taxon>
    </lineage>
</organism>
<reference key="1">
    <citation type="journal article" date="2010" name="Stand. Genomic Sci.">
        <title>Complete genome sequence of Rhizobium leguminosarum bv trifolii strain WSM2304, an effective microsymbiont of the South American clover Trifolium polymorphum.</title>
        <authorList>
            <person name="Reeve W."/>
            <person name="O'Hara G."/>
            <person name="Chain P."/>
            <person name="Ardley J."/>
            <person name="Brau L."/>
            <person name="Nandesena K."/>
            <person name="Tiwari R."/>
            <person name="Malfatti S."/>
            <person name="Kiss H."/>
            <person name="Lapidus A."/>
            <person name="Copeland A."/>
            <person name="Nolan M."/>
            <person name="Land M."/>
            <person name="Ivanova N."/>
            <person name="Mavromatis K."/>
            <person name="Markowitz V."/>
            <person name="Kyrpides N."/>
            <person name="Melino V."/>
            <person name="Denton M."/>
            <person name="Yates R."/>
            <person name="Howieson J."/>
        </authorList>
    </citation>
    <scope>NUCLEOTIDE SEQUENCE [LARGE SCALE GENOMIC DNA]</scope>
    <source>
        <strain>WSM2304</strain>
    </source>
</reference>
<proteinExistence type="inferred from homology"/>
<keyword id="KW-0450">Lipoyl</keyword>
<keyword id="KW-1185">Reference proteome</keyword>
<feature type="chain" id="PRO_1000114541" description="Glycine cleavage system H protein">
    <location>
        <begin position="1"/>
        <end position="120"/>
    </location>
</feature>
<feature type="domain" description="Lipoyl-binding" evidence="2">
    <location>
        <begin position="17"/>
        <end position="99"/>
    </location>
</feature>
<feature type="modified residue" description="N6-lipoyllysine" evidence="1">
    <location>
        <position position="58"/>
    </location>
</feature>
<accession>B5ZQP7</accession>
<gene>
    <name evidence="1" type="primary">gcvH</name>
    <name type="ordered locus">Rleg2_1890</name>
</gene>
<evidence type="ECO:0000255" key="1">
    <source>
        <dbReference type="HAMAP-Rule" id="MF_00272"/>
    </source>
</evidence>
<evidence type="ECO:0000255" key="2">
    <source>
        <dbReference type="PROSITE-ProRule" id="PRU01066"/>
    </source>
</evidence>
<protein>
    <recommendedName>
        <fullName evidence="1">Glycine cleavage system H protein</fullName>
    </recommendedName>
</protein>